<dbReference type="EMBL" id="AP009510">
    <property type="protein sequence ID" value="BAG13562.1"/>
    <property type="molecule type" value="Genomic_DNA"/>
</dbReference>
<dbReference type="RefSeq" id="WP_015423091.1">
    <property type="nucleotide sequence ID" value="NC_020419.1"/>
</dbReference>
<dbReference type="SMR" id="B1GZ80"/>
<dbReference type="STRING" id="471821.TGRD_079"/>
<dbReference type="KEGG" id="rsd:TGRD_079"/>
<dbReference type="PATRIC" id="fig|471821.5.peg.122"/>
<dbReference type="HOGENOM" id="CLU_002794_4_1_0"/>
<dbReference type="Proteomes" id="UP000001691">
    <property type="component" value="Chromosome"/>
</dbReference>
<dbReference type="GO" id="GO:0005737">
    <property type="term" value="C:cytoplasm"/>
    <property type="evidence" value="ECO:0007669"/>
    <property type="project" value="UniProtKB-SubCell"/>
</dbReference>
<dbReference type="GO" id="GO:0005525">
    <property type="term" value="F:GTP binding"/>
    <property type="evidence" value="ECO:0007669"/>
    <property type="project" value="UniProtKB-UniRule"/>
</dbReference>
<dbReference type="GO" id="GO:0003924">
    <property type="term" value="F:GTPase activity"/>
    <property type="evidence" value="ECO:0007669"/>
    <property type="project" value="InterPro"/>
</dbReference>
<dbReference type="GO" id="GO:0003746">
    <property type="term" value="F:translation elongation factor activity"/>
    <property type="evidence" value="ECO:0007669"/>
    <property type="project" value="UniProtKB-UniRule"/>
</dbReference>
<dbReference type="GO" id="GO:0032790">
    <property type="term" value="P:ribosome disassembly"/>
    <property type="evidence" value="ECO:0007669"/>
    <property type="project" value="TreeGrafter"/>
</dbReference>
<dbReference type="CDD" id="cd01886">
    <property type="entry name" value="EF-G"/>
    <property type="match status" value="1"/>
</dbReference>
<dbReference type="CDD" id="cd16262">
    <property type="entry name" value="EFG_III"/>
    <property type="match status" value="1"/>
</dbReference>
<dbReference type="CDD" id="cd01434">
    <property type="entry name" value="EFG_mtEFG1_IV"/>
    <property type="match status" value="1"/>
</dbReference>
<dbReference type="CDD" id="cd03713">
    <property type="entry name" value="EFG_mtEFG_C"/>
    <property type="match status" value="1"/>
</dbReference>
<dbReference type="CDD" id="cd04088">
    <property type="entry name" value="EFG_mtEFG_II"/>
    <property type="match status" value="1"/>
</dbReference>
<dbReference type="FunFam" id="2.40.30.10:FF:000006">
    <property type="entry name" value="Elongation factor G"/>
    <property type="match status" value="1"/>
</dbReference>
<dbReference type="FunFam" id="3.30.230.10:FF:000003">
    <property type="entry name" value="Elongation factor G"/>
    <property type="match status" value="1"/>
</dbReference>
<dbReference type="FunFam" id="3.30.70.240:FF:000001">
    <property type="entry name" value="Elongation factor G"/>
    <property type="match status" value="1"/>
</dbReference>
<dbReference type="FunFam" id="3.30.70.870:FF:000001">
    <property type="entry name" value="Elongation factor G"/>
    <property type="match status" value="1"/>
</dbReference>
<dbReference type="FunFam" id="3.40.50.300:FF:000029">
    <property type="entry name" value="Elongation factor G"/>
    <property type="match status" value="1"/>
</dbReference>
<dbReference type="Gene3D" id="3.30.230.10">
    <property type="match status" value="1"/>
</dbReference>
<dbReference type="Gene3D" id="3.30.70.240">
    <property type="match status" value="1"/>
</dbReference>
<dbReference type="Gene3D" id="3.30.70.870">
    <property type="entry name" value="Elongation Factor G (Translational Gtpase), domain 3"/>
    <property type="match status" value="1"/>
</dbReference>
<dbReference type="Gene3D" id="3.40.50.300">
    <property type="entry name" value="P-loop containing nucleotide triphosphate hydrolases"/>
    <property type="match status" value="1"/>
</dbReference>
<dbReference type="Gene3D" id="2.40.30.10">
    <property type="entry name" value="Translation factors"/>
    <property type="match status" value="1"/>
</dbReference>
<dbReference type="HAMAP" id="MF_00054_B">
    <property type="entry name" value="EF_G_EF_2_B"/>
    <property type="match status" value="1"/>
</dbReference>
<dbReference type="InterPro" id="IPR053905">
    <property type="entry name" value="EF-G-like_DII"/>
</dbReference>
<dbReference type="InterPro" id="IPR041095">
    <property type="entry name" value="EFG_II"/>
</dbReference>
<dbReference type="InterPro" id="IPR009022">
    <property type="entry name" value="EFG_III"/>
</dbReference>
<dbReference type="InterPro" id="IPR035647">
    <property type="entry name" value="EFG_III/V"/>
</dbReference>
<dbReference type="InterPro" id="IPR047872">
    <property type="entry name" value="EFG_IV"/>
</dbReference>
<dbReference type="InterPro" id="IPR035649">
    <property type="entry name" value="EFG_V"/>
</dbReference>
<dbReference type="InterPro" id="IPR000640">
    <property type="entry name" value="EFG_V-like"/>
</dbReference>
<dbReference type="InterPro" id="IPR031157">
    <property type="entry name" value="G_TR_CS"/>
</dbReference>
<dbReference type="InterPro" id="IPR027417">
    <property type="entry name" value="P-loop_NTPase"/>
</dbReference>
<dbReference type="InterPro" id="IPR020568">
    <property type="entry name" value="Ribosomal_Su5_D2-typ_SF"/>
</dbReference>
<dbReference type="InterPro" id="IPR014721">
    <property type="entry name" value="Ribsml_uS5_D2-typ_fold_subgr"/>
</dbReference>
<dbReference type="InterPro" id="IPR005225">
    <property type="entry name" value="Small_GTP-bd"/>
</dbReference>
<dbReference type="InterPro" id="IPR000795">
    <property type="entry name" value="T_Tr_GTP-bd_dom"/>
</dbReference>
<dbReference type="InterPro" id="IPR009000">
    <property type="entry name" value="Transl_B-barrel_sf"/>
</dbReference>
<dbReference type="InterPro" id="IPR004540">
    <property type="entry name" value="Transl_elong_EFG/EF2"/>
</dbReference>
<dbReference type="InterPro" id="IPR005517">
    <property type="entry name" value="Transl_elong_EFG/EF2_IV"/>
</dbReference>
<dbReference type="NCBIfam" id="TIGR00484">
    <property type="entry name" value="EF-G"/>
    <property type="match status" value="1"/>
</dbReference>
<dbReference type="NCBIfam" id="NF009379">
    <property type="entry name" value="PRK12740.1-3"/>
    <property type="match status" value="1"/>
</dbReference>
<dbReference type="NCBIfam" id="NF009381">
    <property type="entry name" value="PRK12740.1-5"/>
    <property type="match status" value="1"/>
</dbReference>
<dbReference type="NCBIfam" id="NF009891">
    <property type="entry name" value="PRK13351.1-1"/>
    <property type="match status" value="1"/>
</dbReference>
<dbReference type="NCBIfam" id="TIGR00231">
    <property type="entry name" value="small_GTP"/>
    <property type="match status" value="1"/>
</dbReference>
<dbReference type="PANTHER" id="PTHR43261:SF1">
    <property type="entry name" value="RIBOSOME-RELEASING FACTOR 2, MITOCHONDRIAL"/>
    <property type="match status" value="1"/>
</dbReference>
<dbReference type="PANTHER" id="PTHR43261">
    <property type="entry name" value="TRANSLATION ELONGATION FACTOR G-RELATED"/>
    <property type="match status" value="1"/>
</dbReference>
<dbReference type="Pfam" id="PF22042">
    <property type="entry name" value="EF-G_D2"/>
    <property type="match status" value="1"/>
</dbReference>
<dbReference type="Pfam" id="PF00679">
    <property type="entry name" value="EFG_C"/>
    <property type="match status" value="1"/>
</dbReference>
<dbReference type="Pfam" id="PF14492">
    <property type="entry name" value="EFG_III"/>
    <property type="match status" value="1"/>
</dbReference>
<dbReference type="Pfam" id="PF03764">
    <property type="entry name" value="EFG_IV"/>
    <property type="match status" value="1"/>
</dbReference>
<dbReference type="Pfam" id="PF00009">
    <property type="entry name" value="GTP_EFTU"/>
    <property type="match status" value="1"/>
</dbReference>
<dbReference type="PRINTS" id="PR00315">
    <property type="entry name" value="ELONGATNFCT"/>
</dbReference>
<dbReference type="SMART" id="SM00838">
    <property type="entry name" value="EFG_C"/>
    <property type="match status" value="1"/>
</dbReference>
<dbReference type="SMART" id="SM00889">
    <property type="entry name" value="EFG_IV"/>
    <property type="match status" value="1"/>
</dbReference>
<dbReference type="SUPFAM" id="SSF54980">
    <property type="entry name" value="EF-G C-terminal domain-like"/>
    <property type="match status" value="2"/>
</dbReference>
<dbReference type="SUPFAM" id="SSF52540">
    <property type="entry name" value="P-loop containing nucleoside triphosphate hydrolases"/>
    <property type="match status" value="1"/>
</dbReference>
<dbReference type="SUPFAM" id="SSF54211">
    <property type="entry name" value="Ribosomal protein S5 domain 2-like"/>
    <property type="match status" value="1"/>
</dbReference>
<dbReference type="SUPFAM" id="SSF50447">
    <property type="entry name" value="Translation proteins"/>
    <property type="match status" value="1"/>
</dbReference>
<dbReference type="PROSITE" id="PS00301">
    <property type="entry name" value="G_TR_1"/>
    <property type="match status" value="1"/>
</dbReference>
<dbReference type="PROSITE" id="PS51722">
    <property type="entry name" value="G_TR_2"/>
    <property type="match status" value="1"/>
</dbReference>
<sequence length="693" mass="76922">MAREYPLNKVRNFGIAAHIDAGKTTTTERILYYTGRTHKIGEVHEGAATMDWMEQEKERGITITSAATYCRWQDMQFNIIDTPGHVDFTAEVERSLRVLDGAVVVFDSGNGVEPQSETVWRQADKYGVPRIVFSNKMDKVGADFFMVVNDIEEKLGAKPIPVQIPIGAESSFQGIVDLVTMKAHIWSGEELGAKFDITDVPKELEEKAHAARSEMIELIADYSDDIMNNFMEGKESTAVQIKQAIRNATLQIKLIPVLCGTAFKNKGVQPMLDAVCDYLPSPLDRKAFKGINPVTSETDSREVDDKAPFSALAFKIQADPYIGKLTYLRVYSGTLESGSYVYNPIKDAKERISRIVRMHSNNREEVKSVNTGDIAAAVGLKNTGTGDTLCDEEKPILLESMDFPVPVIDVAIEPKSKADEEKLGIALNRLSEEDPTFRVRTNEETNQTIIAGMGELHLEILVDRMKREFNVQANVGRPQVAYRETIRKVQEAESKYIRQTGGRGQYGHVVLTVEPQDPGKGYEFVNKIVGGVIPREYIPAIDKGIKEAMTSGTLAGYPVADVKVVVIDGSFHEVDSSEMAFKIAGSMAFKDACRKASPVILEPIMKTEVIVPEEYMGDVIGDLNSRRGKIVSMESKNKVQHIKANVPLAEMFGYSTTLRSLTQGRGNYSMEPSHYEEVPSQIADKILERTTRG</sequence>
<accession>B1GZ80</accession>
<comment type="function">
    <text evidence="1">Catalyzes the GTP-dependent ribosomal translocation step during translation elongation. During this step, the ribosome changes from the pre-translocational (PRE) to the post-translocational (POST) state as the newly formed A-site-bound peptidyl-tRNA and P-site-bound deacylated tRNA move to the P and E sites, respectively. Catalyzes the coordinated movement of the two tRNA molecules, the mRNA and conformational changes in the ribosome.</text>
</comment>
<comment type="subcellular location">
    <subcellularLocation>
        <location evidence="1">Cytoplasm</location>
    </subcellularLocation>
</comment>
<comment type="similarity">
    <text evidence="1">Belongs to the TRAFAC class translation factor GTPase superfamily. Classic translation factor GTPase family. EF-G/EF-2 subfamily.</text>
</comment>
<keyword id="KW-0963">Cytoplasm</keyword>
<keyword id="KW-0251">Elongation factor</keyword>
<keyword id="KW-0342">GTP-binding</keyword>
<keyword id="KW-0547">Nucleotide-binding</keyword>
<keyword id="KW-0648">Protein biosynthesis</keyword>
<evidence type="ECO:0000255" key="1">
    <source>
        <dbReference type="HAMAP-Rule" id="MF_00054"/>
    </source>
</evidence>
<proteinExistence type="inferred from homology"/>
<organism>
    <name type="scientific">Endomicrobium trichonymphae</name>
    <dbReference type="NCBI Taxonomy" id="1408204"/>
    <lineage>
        <taxon>Bacteria</taxon>
        <taxon>Pseudomonadati</taxon>
        <taxon>Elusimicrobiota</taxon>
        <taxon>Endomicrobiia</taxon>
        <taxon>Endomicrobiales</taxon>
        <taxon>Endomicrobiaceae</taxon>
        <taxon>Candidatus Endomicrobiellum</taxon>
    </lineage>
</organism>
<feature type="chain" id="PRO_1000091777" description="Elongation factor G">
    <location>
        <begin position="1"/>
        <end position="693"/>
    </location>
</feature>
<feature type="domain" description="tr-type G">
    <location>
        <begin position="8"/>
        <end position="283"/>
    </location>
</feature>
<feature type="binding site" evidence="1">
    <location>
        <begin position="17"/>
        <end position="24"/>
    </location>
    <ligand>
        <name>GTP</name>
        <dbReference type="ChEBI" id="CHEBI:37565"/>
    </ligand>
</feature>
<feature type="binding site" evidence="1">
    <location>
        <begin position="81"/>
        <end position="85"/>
    </location>
    <ligand>
        <name>GTP</name>
        <dbReference type="ChEBI" id="CHEBI:37565"/>
    </ligand>
</feature>
<feature type="binding site" evidence="1">
    <location>
        <begin position="135"/>
        <end position="138"/>
    </location>
    <ligand>
        <name>GTP</name>
        <dbReference type="ChEBI" id="CHEBI:37565"/>
    </ligand>
</feature>
<gene>
    <name evidence="1" type="primary">fusA</name>
    <name type="ordered locus">TGRD_079</name>
</gene>
<reference key="1">
    <citation type="journal article" date="2008" name="Proc. Natl. Acad. Sci. U.S.A.">
        <title>Complete genome of the uncultured termite group 1 bacteria in a single host protist cell.</title>
        <authorList>
            <person name="Hongoh Y."/>
            <person name="Sharma V.K."/>
            <person name="Prakash T."/>
            <person name="Noda S."/>
            <person name="Taylor T.D."/>
            <person name="Kudo T."/>
            <person name="Sakaki Y."/>
            <person name="Toyoda A."/>
            <person name="Hattori M."/>
            <person name="Ohkuma M."/>
        </authorList>
    </citation>
    <scope>NUCLEOTIDE SEQUENCE [LARGE SCALE GENOMIC DNA]</scope>
</reference>
<name>EFG_ENDTX</name>
<protein>
    <recommendedName>
        <fullName evidence="1">Elongation factor G</fullName>
        <shortName evidence="1">EF-G</shortName>
    </recommendedName>
</protein>